<comment type="function">
    <text>Structural protein that crystallize inside the trichocyst matrix.</text>
</comment>
<comment type="subcellular location">
    <subcellularLocation>
        <location>Trichocyst</location>
    </subcellularLocation>
    <text>These are architecturally complex secretory storage granules-docked at the plasma membrane, ready to rapidly respond to an exocytotic stimulus.</text>
</comment>
<comment type="PTM">
    <text>Two components are produced by post-translational processing from the precursor peptide.</text>
</comment>
<comment type="similarity">
    <text evidence="2">Belongs to the TMP family.</text>
</comment>
<comment type="online information" name="Protein Spotlight">
    <link uri="https://www.proteinspotlight.org/back_issues/003"/>
    <text>The arsenal of Paramecium - Issue 3 of October 2000</text>
</comment>
<evidence type="ECO:0000255" key="1"/>
<evidence type="ECO:0000305" key="2"/>
<accession>Q27181</accession>
<accession>A0E6M9</accession>
<accession>Q27175</accession>
<reference key="1">
    <citation type="journal article" date="1996" name="J. Biol. Chem.">
        <title>Cloning and sequence analysis of genes coding for paramecium secretory granule (trichocyst) proteins. A unique protein fold for a family of polypeptides with different primary structures.</title>
        <authorList>
            <person name="Gautier M.-C."/>
            <person name="Sperling L."/>
            <person name="Madeddu L."/>
        </authorList>
    </citation>
    <scope>NUCLEOTIDE SEQUENCE [GENOMIC DNA]</scope>
    <source>
        <strain>Stock d4-2</strain>
    </source>
</reference>
<reference key="2">
    <citation type="journal article" date="2006" name="Nature">
        <title>Global trends of whole-genome duplications revealed by the ciliate Paramecium tetraurelia.</title>
        <authorList>
            <person name="Aury J.-M."/>
            <person name="Jaillon O."/>
            <person name="Duret L."/>
            <person name="Noel B."/>
            <person name="Jubin C."/>
            <person name="Porcel B.M."/>
            <person name="Segurens B."/>
            <person name="Daubin V."/>
            <person name="Anthouard V."/>
            <person name="Aiach N."/>
            <person name="Arnaiz O."/>
            <person name="Billaut A."/>
            <person name="Beisson J."/>
            <person name="Blanc I."/>
            <person name="Bouhouche K."/>
            <person name="Camara F."/>
            <person name="Duharcourt S."/>
            <person name="Guigo R."/>
            <person name="Gogendeau D."/>
            <person name="Katinka M."/>
            <person name="Keller A.-M."/>
            <person name="Kissmehl R."/>
            <person name="Klotz C."/>
            <person name="Koll F."/>
            <person name="Le Mouel A."/>
            <person name="Lepere G."/>
            <person name="Malinsky S."/>
            <person name="Nowacki M."/>
            <person name="Nowak J.K."/>
            <person name="Plattner H."/>
            <person name="Poulain J."/>
            <person name="Ruiz F."/>
            <person name="Serrano V."/>
            <person name="Zagulski M."/>
            <person name="Dessen P."/>
            <person name="Betermier M."/>
            <person name="Weissenbach J."/>
            <person name="Scarpelli C."/>
            <person name="Schaechter V."/>
            <person name="Sperling L."/>
            <person name="Meyer E."/>
            <person name="Cohen J."/>
            <person name="Wincker P."/>
        </authorList>
    </citation>
    <scope>NUCLEOTIDE SEQUENCE [LARGE SCALE GENOMIC DNA]</scope>
    <source>
        <strain>Stock d4-2</strain>
    </source>
</reference>
<reference key="3">
    <citation type="journal article" date="1995" name="Mol. Biol. Cell">
        <title>A large multigene family codes for the polypeptides of the crystalline trichocyst matrix in Paramecium.</title>
        <authorList>
            <person name="Madeddu L."/>
            <person name="Gautier M.-C."/>
            <person name="Vayssie L."/>
            <person name="Houari A."/>
            <person name="Sperling L."/>
        </authorList>
    </citation>
    <scope>NUCLEOTIDE SEQUENCE [GENOMIC DNA] OF 49-72</scope>
    <source>
        <strain>Stock d4-2</strain>
    </source>
</reference>
<reference key="4">
    <citation type="journal article" date="1994" name="Biochimie">
        <title>Protein processing and morphogenesis of secretory granules in Paramecium.</title>
        <authorList>
            <person name="Madeddu L."/>
            <person name="Gautier M.-C."/>
            <person name="le Caer J.-P."/>
            <person name="de Loubresse N."/>
            <person name="Sperling L."/>
        </authorList>
    </citation>
    <scope>PARTIAL PROTEIN SEQUENCE</scope>
    <source>
        <strain>Stock d4-2</strain>
    </source>
</reference>
<organism>
    <name type="scientific">Paramecium tetraurelia</name>
    <dbReference type="NCBI Taxonomy" id="5888"/>
    <lineage>
        <taxon>Eukaryota</taxon>
        <taxon>Sar</taxon>
        <taxon>Alveolata</taxon>
        <taxon>Ciliophora</taxon>
        <taxon>Intramacronucleata</taxon>
        <taxon>Oligohymenophorea</taxon>
        <taxon>Peniculida</taxon>
        <taxon>Parameciidae</taxon>
        <taxon>Paramecium</taxon>
    </lineage>
</organism>
<keyword id="KW-0175">Coiled coil</keyword>
<keyword id="KW-0903">Direct protein sequencing</keyword>
<keyword id="KW-1185">Reference proteome</keyword>
<keyword id="KW-0732">Signal</keyword>
<protein>
    <recommendedName>
        <fullName>Trichocyst matrix protein T2-C</fullName>
    </recommendedName>
    <alternativeName>
        <fullName>Secretory granule protein T2-C</fullName>
    </alternativeName>
    <alternativeName>
        <fullName>TMP 2-C</fullName>
    </alternativeName>
    <component>
        <recommendedName>
            <fullName>Trichocyst matrix protein T2-C 1</fullName>
        </recommendedName>
    </component>
    <component>
        <recommendedName>
            <fullName>Trichocyst matrix protein T2-C 2</fullName>
        </recommendedName>
    </component>
</protein>
<feature type="signal peptide" evidence="1">
    <location>
        <begin position="1"/>
        <end position="19"/>
    </location>
</feature>
<feature type="propeptide" id="PRO_0000034381">
    <location>
        <begin position="20"/>
        <end position="48"/>
    </location>
</feature>
<feature type="chain" id="PRO_0000034382" description="Trichocyst matrix protein T2-C 1">
    <location>
        <begin position="49"/>
        <end position="183"/>
    </location>
</feature>
<feature type="propeptide" id="PRO_0000034383">
    <location>
        <begin position="184"/>
        <end position="239"/>
    </location>
</feature>
<feature type="chain" id="PRO_0000034384" description="Trichocyst matrix protein T2-C 2">
    <location>
        <begin position="240"/>
        <end position="387"/>
    </location>
</feature>
<feature type="coiled-coil region" evidence="1">
    <location>
        <begin position="51"/>
        <end position="163"/>
    </location>
</feature>
<feature type="coiled-coil region" evidence="1">
    <location>
        <begin position="294"/>
        <end position="333"/>
    </location>
</feature>
<name>T2C_PARTE</name>
<gene>
    <name type="primary">T2C</name>
    <name type="ORF">GSPATT00003811001</name>
</gene>
<sequence length="387" mass="43312">MKTIILALALIVLASSTQADVIATIKKIDQSPFGRTLFDTIWLELQTGDPLDRLLQTLTDLEDRYVAEQKEDDARNHEYQDACTVDIKAFDKDLAESNRKKIELEARLEGQLYPQRGILQGLVAQKQAEVKGYQKDLDELDAQRAEEKADFEEKVLEHQEATAIIAEARRLFADNIEHESFIQKGKATKQPAHKFTKEVASMIQKHFTTSAKKAAKFQHRKGYSKLFKAFATIASKVEQLADAGAVSKIIDLADELLAKIADSLSLLRFAEDKRVEAYKKSRNFIVISLTVAGTALANAQSDLAALNDVIAQVEASLDTTNQRIENVSADRNDRFTQCEEAVQDYQDARSARSSDRDVVSQTIGLVNKELRTLREQLALRQSAGEEI</sequence>
<proteinExistence type="evidence at protein level"/>
<dbReference type="EMBL" id="U47116">
    <property type="protein sequence ID" value="AAC47028.1"/>
    <property type="molecule type" value="Genomic_DNA"/>
</dbReference>
<dbReference type="EMBL" id="CT868660">
    <property type="protein sequence ID" value="CAK90946.1"/>
    <property type="molecule type" value="Genomic_DNA"/>
</dbReference>
<dbReference type="EMBL" id="U27511">
    <property type="protein sequence ID" value="AAA92611.1"/>
    <property type="molecule type" value="Genomic_DNA"/>
</dbReference>
<dbReference type="RefSeq" id="XP_001458343.1">
    <property type="nucleotide sequence ID" value="XM_001458306.1"/>
</dbReference>
<dbReference type="SMR" id="Q27181"/>
<dbReference type="EnsemblProtists" id="CAK90946">
    <property type="protein sequence ID" value="CAK90946"/>
    <property type="gene ID" value="GSPATT00003811001"/>
</dbReference>
<dbReference type="GeneID" id="5044128"/>
<dbReference type="KEGG" id="ptm:GSPATT00003811001"/>
<dbReference type="eggNOG" id="ENOG502SUHG">
    <property type="taxonomic scope" value="Eukaryota"/>
</dbReference>
<dbReference type="HOGENOM" id="CLU_062544_0_0_1"/>
<dbReference type="InParanoid" id="Q27181"/>
<dbReference type="OMA" id="ACTVDIK"/>
<dbReference type="OrthoDB" id="294361at2759"/>
<dbReference type="Proteomes" id="UP000000600">
    <property type="component" value="Partially assembled WGS sequence"/>
</dbReference>
<dbReference type="GO" id="GO:0055039">
    <property type="term" value="C:trichocyst"/>
    <property type="evidence" value="ECO:0007669"/>
    <property type="project" value="UniProtKB-SubCell"/>
</dbReference>